<evidence type="ECO:0000250" key="1"/>
<evidence type="ECO:0000256" key="2">
    <source>
        <dbReference type="SAM" id="MobiDB-lite"/>
    </source>
</evidence>
<sequence length="375" mass="38368">SSTETPPSYNQLNYNENLLRFFNSKPVTAPVELDPPKVEPSYVSSAREDAHRTLSPVQGFEGSGGTGSSGNFTTGSNLHMSSVTNTSNAGTGTSGTGNSGGGGGGGGGGGPGNGAVTPVTLTESLLNKHNDEMEKFMLKKHRESRGRSGEKNKKSANDTLKMVEYSGPGPGPGHGHGIKRGGSHSWEGEANKPKQLLTLNTGGMPPLLDIHTSSASLSKCQASGAGGGGSGSVGGTGNIGSGGSNAQPSTNQYAQSGLSCTQNINLWPPFSVGITTPTSVLSTHTAVAQSSFSTQHNLFPTFYYIPASIAASSPSGTSPNPRPHKHTLVHKSAEQPSTSQAAAATMPLQYMTGLMYPHPSLFYTHPAAAAATAMV</sequence>
<dbReference type="EMBL" id="U51092">
    <property type="protein sequence ID" value="AAB41378.1"/>
    <property type="molecule type" value="Genomic_DNA"/>
</dbReference>
<dbReference type="GO" id="GO:0005634">
    <property type="term" value="C:nucleus"/>
    <property type="evidence" value="ECO:0007669"/>
    <property type="project" value="UniProtKB-SubCell"/>
</dbReference>
<dbReference type="GO" id="GO:0048471">
    <property type="term" value="C:perinuclear region of cytoplasm"/>
    <property type="evidence" value="ECO:0007669"/>
    <property type="project" value="UniProtKB-SubCell"/>
</dbReference>
<dbReference type="GO" id="GO:0000976">
    <property type="term" value="F:transcription cis-regulatory region binding"/>
    <property type="evidence" value="ECO:0007669"/>
    <property type="project" value="TreeGrafter"/>
</dbReference>
<dbReference type="GO" id="GO:0001222">
    <property type="term" value="F:transcription corepressor binding"/>
    <property type="evidence" value="ECO:0007669"/>
    <property type="project" value="TreeGrafter"/>
</dbReference>
<dbReference type="GO" id="GO:0032922">
    <property type="term" value="P:circadian regulation of gene expression"/>
    <property type="evidence" value="ECO:0007669"/>
    <property type="project" value="TreeGrafter"/>
</dbReference>
<dbReference type="GO" id="GO:0043153">
    <property type="term" value="P:entrainment of circadian clock by photoperiod"/>
    <property type="evidence" value="ECO:0007669"/>
    <property type="project" value="TreeGrafter"/>
</dbReference>
<dbReference type="GO" id="GO:0000122">
    <property type="term" value="P:negative regulation of transcription by RNA polymerase II"/>
    <property type="evidence" value="ECO:0007669"/>
    <property type="project" value="TreeGrafter"/>
</dbReference>
<dbReference type="InterPro" id="IPR050760">
    <property type="entry name" value="Period_circadian_regulator"/>
</dbReference>
<dbReference type="PANTHER" id="PTHR11269">
    <property type="entry name" value="PERIOD CIRCADIAN PROTEIN"/>
    <property type="match status" value="1"/>
</dbReference>
<dbReference type="PANTHER" id="PTHR11269:SF16">
    <property type="entry name" value="PERIOD CIRCADIAN PROTEIN"/>
    <property type="match status" value="1"/>
</dbReference>
<gene>
    <name type="primary">per</name>
</gene>
<reference key="1">
    <citation type="journal article" date="1997" name="Mol. Biol. Evol.">
        <title>Interspecific and intraspecific comparisons of the period locus in the Drosophila willistoni sibling species.</title>
        <authorList>
            <person name="Gleason J.M."/>
            <person name="Powell J.R."/>
        </authorList>
    </citation>
    <scope>NUCLEOTIDE SEQUENCE [GENOMIC DNA]</scope>
    <source>
        <strain>0721.0</strain>
    </source>
</reference>
<accession>P91607</accession>
<organism>
    <name type="scientific">Drosophila capricorni</name>
    <name type="common">Fruit fly</name>
    <dbReference type="NCBI Taxonomy" id="46840"/>
    <lineage>
        <taxon>Eukaryota</taxon>
        <taxon>Metazoa</taxon>
        <taxon>Ecdysozoa</taxon>
        <taxon>Arthropoda</taxon>
        <taxon>Hexapoda</taxon>
        <taxon>Insecta</taxon>
        <taxon>Pterygota</taxon>
        <taxon>Neoptera</taxon>
        <taxon>Endopterygota</taxon>
        <taxon>Diptera</taxon>
        <taxon>Brachycera</taxon>
        <taxon>Muscomorpha</taxon>
        <taxon>Ephydroidea</taxon>
        <taxon>Drosophilidae</taxon>
        <taxon>Drosophila</taxon>
        <taxon>Sophophora</taxon>
    </lineage>
</organism>
<keyword id="KW-0090">Biological rhythms</keyword>
<keyword id="KW-0963">Cytoplasm</keyword>
<keyword id="KW-0539">Nucleus</keyword>
<keyword id="KW-0597">Phosphoprotein</keyword>
<keyword id="KW-0677">Repeat</keyword>
<protein>
    <recommendedName>
        <fullName>Period circadian protein</fullName>
    </recommendedName>
</protein>
<feature type="chain" id="PRO_0000162590" description="Period circadian protein">
    <location>
        <begin position="1" status="less than"/>
        <end position="375" status="greater than"/>
    </location>
</feature>
<feature type="region of interest" description="Disordered" evidence="2">
    <location>
        <begin position="28"/>
        <end position="118"/>
    </location>
</feature>
<feature type="region of interest" description="Disordered" evidence="2">
    <location>
        <begin position="140"/>
        <end position="189"/>
    </location>
</feature>
<feature type="region of interest" description="Disordered" evidence="2">
    <location>
        <begin position="220"/>
        <end position="254"/>
    </location>
</feature>
<feature type="compositionally biased region" description="Low complexity" evidence="2">
    <location>
        <begin position="69"/>
        <end position="91"/>
    </location>
</feature>
<feature type="compositionally biased region" description="Gly residues" evidence="2">
    <location>
        <begin position="92"/>
        <end position="113"/>
    </location>
</feature>
<feature type="compositionally biased region" description="Basic and acidic residues" evidence="2">
    <location>
        <begin position="145"/>
        <end position="156"/>
    </location>
</feature>
<feature type="compositionally biased region" description="Gly residues" evidence="2">
    <location>
        <begin position="224"/>
        <end position="243"/>
    </location>
</feature>
<feature type="compositionally biased region" description="Polar residues" evidence="2">
    <location>
        <begin position="245"/>
        <end position="254"/>
    </location>
</feature>
<feature type="non-terminal residue">
    <location>
        <position position="1"/>
    </location>
</feature>
<feature type="non-terminal residue">
    <location>
        <position position="375"/>
    </location>
</feature>
<proteinExistence type="inferred from homology"/>
<name>PER_DROCP</name>
<comment type="function">
    <text evidence="1">Essential for biological clock functions. Determines the period length of circadian and ultradian rhythms; an increase in PER dosage leads to shortened circadian rhythms and a decrease leads to lengthened circadian rhythms. Essential for the circadian rhythmicity of locomotor activity, eclosion behavior, and for the rhythmic component of the male courtship song that originates in the thoracic nervous system. The biological cycle depends on the rhythmic formation and nuclear localization of the TIM-PER complex. Light induces the degradation of TIM, which promotes elimination of PER. Nuclear activity of the heterodimer coordinatively regulates PER and TIM transcription through a negative feedback loop. Behaves as a negative element in circadian transcriptional loop. Does not appear to bind DNA, suggesting indirect transcriptional inhibition (By similarity).</text>
</comment>
<comment type="subunit">
    <text evidence="1">Forms a heterodimer with timeless (TIM); the complex then translocates into the nucleus.</text>
</comment>
<comment type="subcellular location">
    <subcellularLocation>
        <location evidence="1">Nucleus</location>
    </subcellularLocation>
    <subcellularLocation>
        <location evidence="1">Cytoplasm</location>
        <location evidence="1">Perinuclear region</location>
    </subcellularLocation>
    <text evidence="1">Nuclear at specific periods of the day. First accumulates in the perinuclear region about one hour before translocation into the nucleus. Interaction with Tim is required for nuclear localization (By similarity).</text>
</comment>
<comment type="PTM">
    <text evidence="1">Phosphorylated with a circadian rhythmicity, probably by the double-time protein (dbt). Phosphorylation could be implicated in the stability of per monomer and in the formation of heterodimer per-tim (By similarity).</text>
</comment>